<name>RLMH_ALCBS</name>
<gene>
    <name evidence="1" type="primary">rlmH</name>
    <name type="ordered locus">ABO_1954</name>
</gene>
<proteinExistence type="inferred from homology"/>
<accession>Q0VN46</accession>
<keyword id="KW-0963">Cytoplasm</keyword>
<keyword id="KW-0489">Methyltransferase</keyword>
<keyword id="KW-1185">Reference proteome</keyword>
<keyword id="KW-0698">rRNA processing</keyword>
<keyword id="KW-0949">S-adenosyl-L-methionine</keyword>
<keyword id="KW-0808">Transferase</keyword>
<evidence type="ECO:0000255" key="1">
    <source>
        <dbReference type="HAMAP-Rule" id="MF_00658"/>
    </source>
</evidence>
<comment type="function">
    <text evidence="1">Specifically methylates the pseudouridine at position 1915 (m3Psi1915) in 23S rRNA.</text>
</comment>
<comment type="catalytic activity">
    <reaction evidence="1">
        <text>pseudouridine(1915) in 23S rRNA + S-adenosyl-L-methionine = N(3)-methylpseudouridine(1915) in 23S rRNA + S-adenosyl-L-homocysteine + H(+)</text>
        <dbReference type="Rhea" id="RHEA:42752"/>
        <dbReference type="Rhea" id="RHEA-COMP:10221"/>
        <dbReference type="Rhea" id="RHEA-COMP:10222"/>
        <dbReference type="ChEBI" id="CHEBI:15378"/>
        <dbReference type="ChEBI" id="CHEBI:57856"/>
        <dbReference type="ChEBI" id="CHEBI:59789"/>
        <dbReference type="ChEBI" id="CHEBI:65314"/>
        <dbReference type="ChEBI" id="CHEBI:74486"/>
        <dbReference type="EC" id="2.1.1.177"/>
    </reaction>
</comment>
<comment type="subunit">
    <text evidence="1">Homodimer.</text>
</comment>
<comment type="subcellular location">
    <subcellularLocation>
        <location evidence="1">Cytoplasm</location>
    </subcellularLocation>
</comment>
<comment type="similarity">
    <text evidence="1">Belongs to the RNA methyltransferase RlmH family.</text>
</comment>
<protein>
    <recommendedName>
        <fullName evidence="1">Ribosomal RNA large subunit methyltransferase H</fullName>
        <ecNumber evidence="1">2.1.1.177</ecNumber>
    </recommendedName>
    <alternativeName>
        <fullName evidence="1">23S rRNA (pseudouridine1915-N3)-methyltransferase</fullName>
    </alternativeName>
    <alternativeName>
        <fullName evidence="1">23S rRNA m3Psi1915 methyltransferase</fullName>
    </alternativeName>
    <alternativeName>
        <fullName evidence="1">rRNA (pseudouridine-N3-)-methyltransferase RlmH</fullName>
    </alternativeName>
</protein>
<dbReference type="EC" id="2.1.1.177" evidence="1"/>
<dbReference type="EMBL" id="AM286690">
    <property type="protein sequence ID" value="CAL17402.1"/>
    <property type="molecule type" value="Genomic_DNA"/>
</dbReference>
<dbReference type="RefSeq" id="WP_011589233.1">
    <property type="nucleotide sequence ID" value="NC_008260.1"/>
</dbReference>
<dbReference type="SMR" id="Q0VN46"/>
<dbReference type="STRING" id="393595.ABO_1954"/>
<dbReference type="KEGG" id="abo:ABO_1954"/>
<dbReference type="eggNOG" id="COG1576">
    <property type="taxonomic scope" value="Bacteria"/>
</dbReference>
<dbReference type="HOGENOM" id="CLU_100552_1_0_6"/>
<dbReference type="OrthoDB" id="9806643at2"/>
<dbReference type="Proteomes" id="UP000008871">
    <property type="component" value="Chromosome"/>
</dbReference>
<dbReference type="GO" id="GO:0005737">
    <property type="term" value="C:cytoplasm"/>
    <property type="evidence" value="ECO:0007669"/>
    <property type="project" value="UniProtKB-SubCell"/>
</dbReference>
<dbReference type="GO" id="GO:0070038">
    <property type="term" value="F:rRNA (pseudouridine-N3-)-methyltransferase activity"/>
    <property type="evidence" value="ECO:0007669"/>
    <property type="project" value="UniProtKB-UniRule"/>
</dbReference>
<dbReference type="CDD" id="cd18081">
    <property type="entry name" value="RlmH-like"/>
    <property type="match status" value="1"/>
</dbReference>
<dbReference type="Gene3D" id="3.40.1280.10">
    <property type="match status" value="1"/>
</dbReference>
<dbReference type="HAMAP" id="MF_00658">
    <property type="entry name" value="23SrRNA_methyltr_H"/>
    <property type="match status" value="1"/>
</dbReference>
<dbReference type="InterPro" id="IPR029028">
    <property type="entry name" value="Alpha/beta_knot_MTases"/>
</dbReference>
<dbReference type="InterPro" id="IPR003742">
    <property type="entry name" value="RlmH-like"/>
</dbReference>
<dbReference type="InterPro" id="IPR029026">
    <property type="entry name" value="tRNA_m1G_MTases_N"/>
</dbReference>
<dbReference type="NCBIfam" id="NF000986">
    <property type="entry name" value="PRK00103.1-4"/>
    <property type="match status" value="1"/>
</dbReference>
<dbReference type="NCBIfam" id="TIGR00246">
    <property type="entry name" value="tRNA_RlmH_YbeA"/>
    <property type="match status" value="1"/>
</dbReference>
<dbReference type="PANTHER" id="PTHR33603">
    <property type="entry name" value="METHYLTRANSFERASE"/>
    <property type="match status" value="1"/>
</dbReference>
<dbReference type="PANTHER" id="PTHR33603:SF1">
    <property type="entry name" value="RIBOSOMAL RNA LARGE SUBUNIT METHYLTRANSFERASE H"/>
    <property type="match status" value="1"/>
</dbReference>
<dbReference type="Pfam" id="PF02590">
    <property type="entry name" value="SPOUT_MTase"/>
    <property type="match status" value="1"/>
</dbReference>
<dbReference type="PIRSF" id="PIRSF004505">
    <property type="entry name" value="MT_bac"/>
    <property type="match status" value="1"/>
</dbReference>
<dbReference type="SUPFAM" id="SSF75217">
    <property type="entry name" value="alpha/beta knot"/>
    <property type="match status" value="1"/>
</dbReference>
<reference key="1">
    <citation type="journal article" date="2006" name="Nat. Biotechnol.">
        <title>Genome sequence of the ubiquitous hydrocarbon-degrading marine bacterium Alcanivorax borkumensis.</title>
        <authorList>
            <person name="Schneiker S."/>
            <person name="Martins dos Santos V.A.P."/>
            <person name="Bartels D."/>
            <person name="Bekel T."/>
            <person name="Brecht M."/>
            <person name="Buhrmester J."/>
            <person name="Chernikova T.N."/>
            <person name="Denaro R."/>
            <person name="Ferrer M."/>
            <person name="Gertler C."/>
            <person name="Goesmann A."/>
            <person name="Golyshina O.V."/>
            <person name="Kaminski F."/>
            <person name="Khachane A.N."/>
            <person name="Lang S."/>
            <person name="Linke B."/>
            <person name="McHardy A.C."/>
            <person name="Meyer F."/>
            <person name="Nechitaylo T."/>
            <person name="Puehler A."/>
            <person name="Regenhardt D."/>
            <person name="Rupp O."/>
            <person name="Sabirova J.S."/>
            <person name="Selbitschka W."/>
            <person name="Yakimov M.M."/>
            <person name="Timmis K.N."/>
            <person name="Vorhoelter F.-J."/>
            <person name="Weidner S."/>
            <person name="Kaiser O."/>
            <person name="Golyshin P.N."/>
        </authorList>
    </citation>
    <scope>NUCLEOTIDE SEQUENCE [LARGE SCALE GENOMIC DNA]</scope>
    <source>
        <strain>ATCC 700651 / DSM 11573 / NCIMB 13689 / SK2</strain>
    </source>
</reference>
<organism>
    <name type="scientific">Alcanivorax borkumensis (strain ATCC 700651 / DSM 11573 / NCIMB 13689 / SK2)</name>
    <dbReference type="NCBI Taxonomy" id="393595"/>
    <lineage>
        <taxon>Bacteria</taxon>
        <taxon>Pseudomonadati</taxon>
        <taxon>Pseudomonadota</taxon>
        <taxon>Gammaproteobacteria</taxon>
        <taxon>Oceanospirillales</taxon>
        <taxon>Alcanivoracaceae</taxon>
        <taxon>Alcanivorax</taxon>
    </lineage>
</organism>
<feature type="chain" id="PRO_0000260533" description="Ribosomal RNA large subunit methyltransferase H">
    <location>
        <begin position="1"/>
        <end position="160"/>
    </location>
</feature>
<feature type="binding site" evidence="1">
    <location>
        <position position="78"/>
    </location>
    <ligand>
        <name>S-adenosyl-L-methionine</name>
        <dbReference type="ChEBI" id="CHEBI:59789"/>
    </ligand>
</feature>
<feature type="binding site" evidence="1">
    <location>
        <position position="109"/>
    </location>
    <ligand>
        <name>S-adenosyl-L-methionine</name>
        <dbReference type="ChEBI" id="CHEBI:59789"/>
    </ligand>
</feature>
<feature type="binding site" evidence="1">
    <location>
        <begin position="128"/>
        <end position="133"/>
    </location>
    <ligand>
        <name>S-adenosyl-L-methionine</name>
        <dbReference type="ChEBI" id="CHEBI:59789"/>
    </ligand>
</feature>
<sequence length="160" mass="17757">MHLVLLAIGTRMPAWVTEGFNEYQKRMPPDMRLTLEEIPMPKRGKGDAGSQIRAEADALRKRLETIVKKSPGAKTVALEVNGRALDTHALSRKLGELKDVGQDLVLLVGGPDGLCPELSASAHERWSLSNLTLPHPLVRVLLAEQLYRGWTLLTGHPYHR</sequence>